<organism>
    <name type="scientific">Homo sapiens</name>
    <name type="common">Human</name>
    <dbReference type="NCBI Taxonomy" id="9606"/>
    <lineage>
        <taxon>Eukaryota</taxon>
        <taxon>Metazoa</taxon>
        <taxon>Chordata</taxon>
        <taxon>Craniata</taxon>
        <taxon>Vertebrata</taxon>
        <taxon>Euteleostomi</taxon>
        <taxon>Mammalia</taxon>
        <taxon>Eutheria</taxon>
        <taxon>Euarchontoglires</taxon>
        <taxon>Primates</taxon>
        <taxon>Haplorrhini</taxon>
        <taxon>Catarrhini</taxon>
        <taxon>Hominidae</taxon>
        <taxon>Homo</taxon>
    </lineage>
</organism>
<proteinExistence type="evidence at protein level"/>
<gene>
    <name evidence="25" type="primary">TLK2</name>
</gene>
<sequence>MMEELHSLDPRRQELLEARFTGVGVSKGPLNSESSNQSLCSVGSLSDKEVETPEKKQNDQRNRKRKAEPYETSQGKGTPRGHKISDYFEFAGGSAPGTSPGRSVPPVARSSPQHSLSNPLPRRVEQPLYGLDGSAAKEATEEQSALPTLMSVMLAKPRLDTEQLAQRGAGLCFTFVSAQQNSPSSTGSGNTEHSCSSQKQISIQHRQTQSDLTIEKISALENSKNSDLEKKEGRIDDLLRANCDLRRQIDEQQKMLEKYKERLNRCVTMSKKLLIEKSKQEKMACRDKSMQDRLRLGHFTTVRHGASFTEQWTDGYAFQNLIKQQERINSQREEIERQRKMLAKRKPPAMGQAPPATNEQKQRKSKTNGAENETPSSGNTELKDTAPALGAHSLLRLTLAEYHEQEEIFKLRLGHLKKEEAEIQAELERLERVRNLHIRELKRIHNEDNSQFKDHPTLNDRYLLLHLLGRGGFSEVYKAFDLTEQRYVAVKIHQLNKNWRDEKKENYHKHACREYRIHKELDHPRIVKLYDYFSLDTDSFCTVLEYCEGNDLDFYLKQHKLMSEKEARSIIMQIVNALKYLNEIKPPIIHYDLKPGNILLVNGTACGEIKITDFGLSKIMDDDSYNSVDGMELTSQGAGTYWYLPPECFVVGKEPPKISNKVDVWSVGVIFYQCLYGRKPFGHNQSQQDILQENTILKATEVQFPPKPVVTPEAKAFIRRCLAYRKEDRIDVQQLACDPYLLPHIRKSVSTSSPAGAAIASTSGASNNSSSN</sequence>
<feature type="chain" id="PRO_0000086754" description="Serine/threonine-protein kinase tousled-like 2">
    <location>
        <begin position="1"/>
        <end position="772"/>
    </location>
</feature>
<feature type="domain" description="Protein kinase" evidence="2">
    <location>
        <begin position="462"/>
        <end position="741"/>
    </location>
</feature>
<feature type="region of interest" description="Disordered" evidence="3">
    <location>
        <begin position="24"/>
        <end position="126"/>
    </location>
</feature>
<feature type="region of interest" description="Disordered" evidence="3">
    <location>
        <begin position="180"/>
        <end position="208"/>
    </location>
</feature>
<feature type="region of interest" description="Required for interaction with TLK1 and DYNLL1/LC8" evidence="16">
    <location>
        <begin position="225"/>
        <end position="276"/>
    </location>
</feature>
<feature type="region of interest" description="Disordered" evidence="3">
    <location>
        <begin position="342"/>
        <end position="385"/>
    </location>
</feature>
<feature type="coiled-coil region" evidence="1">
    <location>
        <begin position="225"/>
        <end position="276"/>
    </location>
</feature>
<feature type="coiled-coil region" evidence="1">
    <location>
        <begin position="317"/>
        <end position="347"/>
    </location>
</feature>
<feature type="coiled-coil region" evidence="1">
    <location>
        <begin position="403"/>
        <end position="451"/>
    </location>
</feature>
<feature type="compositionally biased region" description="Polar residues" evidence="3">
    <location>
        <begin position="29"/>
        <end position="44"/>
    </location>
</feature>
<feature type="compositionally biased region" description="Basic and acidic residues" evidence="3">
    <location>
        <begin position="46"/>
        <end position="61"/>
    </location>
</feature>
<feature type="compositionally biased region" description="Polar residues" evidence="3">
    <location>
        <begin position="367"/>
        <end position="380"/>
    </location>
</feature>
<feature type="active site" description="Proton acceptor">
    <location>
        <position position="592"/>
    </location>
</feature>
<feature type="binding site" evidence="2">
    <location>
        <begin position="468"/>
        <end position="476"/>
    </location>
    <ligand>
        <name>ATP</name>
        <dbReference type="ChEBI" id="CHEBI:30616"/>
    </ligand>
</feature>
<feature type="binding site" evidence="2">
    <location>
        <position position="491"/>
    </location>
    <ligand>
        <name>ATP</name>
        <dbReference type="ChEBI" id="CHEBI:30616"/>
    </ligand>
</feature>
<feature type="modified residue" description="Phosphoserine" evidence="31">
    <location>
        <position position="73"/>
    </location>
</feature>
<feature type="modified residue" description="Phosphoserine" evidence="29 31">
    <location>
        <position position="94"/>
    </location>
</feature>
<feature type="modified residue" description="Phosphoserine" evidence="28 30 31">
    <location>
        <position position="99"/>
    </location>
</feature>
<feature type="modified residue" description="Phosphoserine" evidence="31">
    <location>
        <position position="115"/>
    </location>
</feature>
<feature type="modified residue" description="Phosphoserine" evidence="31">
    <location>
        <position position="117"/>
    </location>
</feature>
<feature type="modified residue" description="Phosphoserine" evidence="29 31">
    <location>
        <position position="134"/>
    </location>
</feature>
<feature type="modified residue" description="Phosphoserine; by CHEK1" evidence="24">
    <location>
        <position position="750"/>
    </location>
</feature>
<feature type="splice variant" id="VSP_050572" description="In isoform 3." evidence="22">
    <location>
        <begin position="90"/>
        <end position="121"/>
    </location>
</feature>
<feature type="splice variant" id="VSP_050573" description="In isoform 2 and isoform 3." evidence="21 22">
    <location>
        <begin position="375"/>
        <end position="396"/>
    </location>
</feature>
<feature type="sequence variant" id="VAR_041216" description="In dbSNP:rs45550140." evidence="10 19">
    <original>H</original>
    <variation>R</variation>
    <location>
        <position position="6"/>
    </location>
</feature>
<feature type="sequence variant" id="VAR_081017" description="In MRD57." evidence="15">
    <location>
        <begin position="13"/>
        <end position="772"/>
    </location>
</feature>
<feature type="sequence variant" id="VAR_041217" evidence="10">
    <original>E</original>
    <variation>D</variation>
    <location>
        <position position="54"/>
    </location>
</feature>
<feature type="sequence variant" id="VAR_081018" description="In MRD57." evidence="15">
    <location>
        <begin position="61"/>
        <end position="772"/>
    </location>
</feature>
<feature type="sequence variant" id="VAR_081019" description="In MRD57." evidence="15">
    <location>
        <begin position="68"/>
        <end position="772"/>
    </location>
</feature>
<feature type="sequence variant" id="VAR_041218" description="In dbSNP:rs2598147." evidence="10">
    <original>A</original>
    <variation>G</variation>
    <location>
        <position position="95"/>
    </location>
</feature>
<feature type="sequence variant" id="VAR_041219" evidence="10">
    <original>A</original>
    <variation>G</variation>
    <location>
        <position position="108"/>
    </location>
</feature>
<feature type="sequence variant" id="VAR_041220" description="In dbSNP:rs1555617262." evidence="10">
    <original>R</original>
    <variation>L</variation>
    <location>
        <position position="109"/>
    </location>
</feature>
<feature type="sequence variant" id="VAR_041221" description="In a gastric adenocarcinoma sample; somatic mutation; dbSNP:rs1331331651." evidence="10">
    <original>F</original>
    <variation>L</variation>
    <location>
        <position position="173"/>
    </location>
</feature>
<feature type="sequence variant" id="VAR_081020" description="In MRD57." evidence="15">
    <location>
        <begin position="259"/>
        <end position="772"/>
    </location>
</feature>
<feature type="sequence variant" id="VAR_081021" description="In MRD57." evidence="15">
    <location>
        <begin position="262"/>
        <end position="772"/>
    </location>
</feature>
<feature type="sequence variant" id="VAR_041222" description="In dbSNP:rs762409144." evidence="10">
    <original>R</original>
    <variation>Q</variation>
    <location>
        <position position="262"/>
    </location>
</feature>
<feature type="sequence variant" id="VAR_081022" description="In MRD57; uncertain significance; dbSNP:rs1555639254." evidence="15">
    <original>G</original>
    <variation>D</variation>
    <location>
        <position position="297"/>
    </location>
</feature>
<feature type="sequence variant" id="VAR_081023" description="In MRD57." evidence="15">
    <location>
        <begin position="303"/>
        <end position="772"/>
    </location>
</feature>
<feature type="sequence variant" id="VAR_081024" description="In MRD57." evidence="15">
    <location>
        <begin position="330"/>
        <end position="772"/>
    </location>
</feature>
<feature type="sequence variant" id="VAR_081025" description="In MRD57; uncertain significance; dbSNP:rs1567948287." evidence="15">
    <original>R</original>
    <variation>Q</variation>
    <location>
        <position position="339"/>
    </location>
</feature>
<feature type="sequence variant" id="VAR_081026" description="In MRD57; uncertain significance; dbSNP:rs1567948262." evidence="15">
    <original>R</original>
    <variation>W</variation>
    <location>
        <position position="339"/>
    </location>
</feature>
<feature type="sequence variant" id="VAR_081027" description="In MRD57; uncertain significance; dbSNP:rs1567959483." evidence="15">
    <original>E</original>
    <variation>K</variation>
    <location>
        <position position="447"/>
    </location>
</feature>
<feature type="sequence variant" id="VAR_087040" description="In MRD57; uncertain significance." evidence="17">
    <location>
        <begin position="475"/>
        <end position="772"/>
    </location>
</feature>
<feature type="sequence variant" id="VAR_081028" description="In MRD57; reduced kinase activity; dbSNP:rs1567974030." evidence="15 16">
    <original>H</original>
    <variation>R</variation>
    <location>
        <position position="493"/>
    </location>
</feature>
<feature type="sequence variant" id="VAR_081029" description="In MRD57; severely reduced kinase activity; dbSNP:rs1567995650." evidence="15 16">
    <original>H</original>
    <variation>R</variation>
    <location>
        <position position="518"/>
    </location>
</feature>
<feature type="sequence variant" id="VAR_087041" description="In MRD57; uncertain significance; exhibits abnormal perinuclear localization instead of diffuse nuclear localization; mildly impairs kinase activity; reduced phosphorylation of ASF1A; dbSNP:rs2082811958." evidence="17">
    <original>D</original>
    <variation>G</variation>
    <location>
        <position position="551"/>
    </location>
</feature>
<feature type="sequence variant" id="VAR_081030" description="In MRD57; dbSNP:rs1283838287." evidence="15">
    <original>R</original>
    <variation>W</variation>
    <location>
        <position position="568"/>
    </location>
</feature>
<feature type="sequence variant" id="VAR_081031" description="In MRD57." evidence="15">
    <location>
        <begin position="573"/>
        <end position="772"/>
    </location>
</feature>
<feature type="sequence variant" id="VAR_087042" description="In MRD57; exhibits abnormal perinuclear localization instead of diffuse nuclear localization; impairs kinase activity; reduced phosphorylation of ASF1A; dbSNP:rs2082914686." evidence="12 17">
    <original>S</original>
    <variation>L</variation>
    <location>
        <position position="617"/>
    </location>
</feature>
<feature type="sequence variant" id="VAR_081032" description="In MRD57; reduced phosphorylation of ASF1A; dbSNP:rs1568006217." evidence="15 16">
    <original>D</original>
    <variation>N</variation>
    <location>
        <position position="629"/>
    </location>
</feature>
<feature type="sequence variant" id="VAR_081033" description="In MRD57; dbSNP:rs1568018905." evidence="15">
    <original>P</original>
    <variation>R</variation>
    <location>
        <position position="680"/>
    </location>
</feature>
<feature type="sequence variant" id="VAR_081034" description="In MRD57; uncertain significance." evidence="14 15">
    <location>
        <begin position="720"/>
        <end position="772"/>
    </location>
</feature>
<feature type="sequence variant" id="VAR_081035" description="In MRD57; uncertain significance." evidence="15">
    <location>
        <begin position="746"/>
        <end position="772"/>
    </location>
</feature>
<feature type="mutagenesis site" description="Reduced kinase activity." evidence="16">
    <original>H</original>
    <variation>N</variation>
    <location>
        <position position="518"/>
    </location>
</feature>
<feature type="mutagenesis site" description="Loss of kinase activity. No impact on interaction with ASF1A." evidence="17 18">
    <original>D</original>
    <variation>V</variation>
    <location>
        <position position="592"/>
    </location>
</feature>
<feature type="mutagenesis site" description="Loss of kinase activity." evidence="5 6 16">
    <original>D</original>
    <variation>A</variation>
    <location>
        <position position="613"/>
    </location>
</feature>
<feature type="mutagenesis site" description="Increase in autophosphorylation." evidence="16">
    <original>S</original>
    <variation>A</variation>
    <location>
        <position position="617"/>
    </location>
</feature>
<feature type="mutagenesis site" description="Loss of kinase activity." evidence="16">
    <original>S</original>
    <variation>D</variation>
    <location>
        <position position="617"/>
    </location>
</feature>
<feature type="mutagenesis site" description="Reduced kinase activity." evidence="16">
    <original>S</original>
    <variation>A</variation>
    <location>
        <position position="659"/>
    </location>
</feature>
<feature type="mutagenesis site" description="Reduced kinase activity." evidence="16">
    <original>S</original>
    <variation>A</variation>
    <location>
        <position position="686"/>
    </location>
</feature>
<feature type="mutagenesis site" description="Reduced kinase activity." evidence="16">
    <original>S</original>
    <variation>D</variation>
    <location>
        <position position="686"/>
    </location>
</feature>
<feature type="mutagenesis site" description="Reduced kinase activity." evidence="16">
    <original>T</original>
    <variation>A</variation>
    <location>
        <position position="695"/>
    </location>
</feature>
<feature type="mutagenesis site" description="Reduced phosphorylation of ASF1A." evidence="16">
    <original>R</original>
    <variation>A</variation>
    <location>
        <position position="720"/>
    </location>
</feature>
<feature type="sequence conflict" description="In Ref. 1; BAA20561." evidence="23" ref="1">
    <original>M</original>
    <variation>I</variation>
    <location>
        <position position="1"/>
    </location>
</feature>
<feature type="sequence conflict" description="In Ref. 1; BAA20561." evidence="23" ref="1">
    <original>T</original>
    <variation>P</variation>
    <location>
        <position position="161"/>
    </location>
</feature>
<feature type="sequence conflict" description="In Ref. 2; AAF03095." evidence="23" ref="2">
    <original>Q</original>
    <variation>R</variation>
    <location>
        <position position="207"/>
    </location>
</feature>
<feature type="sequence conflict" description="In Ref. 1; BAA20561." evidence="23" ref="1">
    <original>M</original>
    <variation>I</variation>
    <location>
        <position position="562"/>
    </location>
</feature>
<feature type="sequence conflict" description="In Ref. 2; AAF03095." evidence="23" ref="2">
    <original>E</original>
    <variation>R</variation>
    <location>
        <position position="727"/>
    </location>
</feature>
<feature type="helix" evidence="33">
    <location>
        <begin position="10"/>
        <end position="21"/>
    </location>
</feature>
<feature type="strand" evidence="32">
    <location>
        <begin position="463"/>
        <end position="470"/>
    </location>
</feature>
<feature type="strand" evidence="32">
    <location>
        <begin position="472"/>
        <end position="481"/>
    </location>
</feature>
<feature type="turn" evidence="32">
    <location>
        <begin position="482"/>
        <end position="485"/>
    </location>
</feature>
<feature type="strand" evidence="32">
    <location>
        <begin position="486"/>
        <end position="494"/>
    </location>
</feature>
<feature type="strand" evidence="32">
    <location>
        <begin position="497"/>
        <end position="499"/>
    </location>
</feature>
<feature type="helix" evidence="32">
    <location>
        <begin position="502"/>
        <end position="519"/>
    </location>
</feature>
<feature type="strand" evidence="32">
    <location>
        <begin position="529"/>
        <end position="534"/>
    </location>
</feature>
<feature type="strand" evidence="32">
    <location>
        <begin position="539"/>
        <end position="545"/>
    </location>
</feature>
<feature type="strand" evidence="32">
    <location>
        <begin position="549"/>
        <end position="551"/>
    </location>
</feature>
<feature type="helix" evidence="32">
    <location>
        <begin position="552"/>
        <end position="559"/>
    </location>
</feature>
<feature type="helix" evidence="32">
    <location>
        <begin position="564"/>
        <end position="581"/>
    </location>
</feature>
<feature type="strand" evidence="32">
    <location>
        <begin position="584"/>
        <end position="586"/>
    </location>
</feature>
<feature type="helix" evidence="32">
    <location>
        <begin position="595"/>
        <end position="597"/>
    </location>
</feature>
<feature type="strand" evidence="32">
    <location>
        <begin position="598"/>
        <end position="600"/>
    </location>
</feature>
<feature type="strand" evidence="32">
    <location>
        <begin position="603"/>
        <end position="607"/>
    </location>
</feature>
<feature type="strand" evidence="32">
    <location>
        <begin position="609"/>
        <end position="611"/>
    </location>
</feature>
<feature type="turn" evidence="32">
    <location>
        <begin position="622"/>
        <end position="624"/>
    </location>
</feature>
<feature type="turn" evidence="32">
    <location>
        <begin position="627"/>
        <end position="629"/>
    </location>
</feature>
<feature type="helix" evidence="32">
    <location>
        <begin position="641"/>
        <end position="643"/>
    </location>
</feature>
<feature type="helix" evidence="32">
    <location>
        <begin position="646"/>
        <end position="649"/>
    </location>
</feature>
<feature type="strand" evidence="32">
    <location>
        <begin position="652"/>
        <end position="654"/>
    </location>
</feature>
<feature type="helix" evidence="32">
    <location>
        <begin position="661"/>
        <end position="676"/>
    </location>
</feature>
<feature type="strand" evidence="32">
    <location>
        <begin position="680"/>
        <end position="682"/>
    </location>
</feature>
<feature type="helix" evidence="32">
    <location>
        <begin position="687"/>
        <end position="693"/>
    </location>
</feature>
<feature type="turn" evidence="32">
    <location>
        <begin position="694"/>
        <end position="698"/>
    </location>
</feature>
<feature type="strand" evidence="32">
    <location>
        <begin position="706"/>
        <end position="708"/>
    </location>
</feature>
<feature type="helix" evidence="32">
    <location>
        <begin position="712"/>
        <end position="721"/>
    </location>
</feature>
<feature type="helix" evidence="32">
    <location>
        <begin position="726"/>
        <end position="728"/>
    </location>
</feature>
<feature type="helix" evidence="32">
    <location>
        <begin position="732"/>
        <end position="735"/>
    </location>
</feature>
<feature type="helix" evidence="32">
    <location>
        <begin position="739"/>
        <end position="741"/>
    </location>
</feature>
<reference evidence="23" key="1">
    <citation type="journal article" date="1997" name="Gene">
        <title>cDNA cloning and chromosomal mapping of genes encoding novel protein kinases termed PKU-alpha and PKU-beta, which have nuclear localization signal.</title>
        <authorList>
            <person name="Yamakawa A."/>
            <person name="Kameoka Y."/>
            <person name="Hashimoto K."/>
            <person name="Yoshitake Y."/>
            <person name="Nishikawa K."/>
            <person name="Tanihara K."/>
            <person name="Date T."/>
        </authorList>
    </citation>
    <scope>NUCLEOTIDE SEQUENCE [MRNA] (ISOFORM 3)</scope>
    <scope>VARIANT ARG-6</scope>
    <scope>FUNCTION</scope>
    <scope>SUBCELLULAR LOCATION</scope>
    <scope>TISSUE SPECIFICITY</scope>
    <source>
        <tissue evidence="19">Placenta</tissue>
        <tissue evidence="19">Testis</tissue>
    </source>
</reference>
<reference evidence="23" key="2">
    <citation type="journal article" date="1999" name="EMBO J.">
        <title>Mammalian homologues of the plant tousled gene code for cell-cycle-regulated kinases with maximal activities linked to ongoing DNA replication.</title>
        <authorList>
            <person name="Sillje H.H.W."/>
            <person name="Takahashi K."/>
            <person name="Tanaka K."/>
            <person name="Van Houwe G."/>
            <person name="Nigg E.A."/>
        </authorList>
    </citation>
    <scope>NUCLEOTIDE SEQUENCE [MRNA] (ISOFORM 2)</scope>
    <scope>FUNCTION</scope>
    <scope>MUTAGENESIS OF ASP-613</scope>
    <scope>SUBCELLULAR LOCATION</scope>
    <scope>SUBUNIT</scope>
    <scope>INTERACTION WITH TLK1</scope>
    <scope>ACTIVITY REGULATION</scope>
    <source>
        <tissue evidence="5">Placenta</tissue>
    </source>
</reference>
<reference key="3">
    <citation type="submission" date="2005-09" db="EMBL/GenBank/DDBJ databases">
        <authorList>
            <person name="Mural R.J."/>
            <person name="Istrail S."/>
            <person name="Sutton G.G."/>
            <person name="Florea L."/>
            <person name="Halpern A.L."/>
            <person name="Mobarry C.M."/>
            <person name="Lippert R."/>
            <person name="Walenz B."/>
            <person name="Shatkay H."/>
            <person name="Dew I."/>
            <person name="Miller J.R."/>
            <person name="Flanigan M.J."/>
            <person name="Edwards N.J."/>
            <person name="Bolanos R."/>
            <person name="Fasulo D."/>
            <person name="Halldorsson B.V."/>
            <person name="Hannenhalli S."/>
            <person name="Turner R."/>
            <person name="Yooseph S."/>
            <person name="Lu F."/>
            <person name="Nusskern D.R."/>
            <person name="Shue B.C."/>
            <person name="Zheng X.H."/>
            <person name="Zhong F."/>
            <person name="Delcher A.L."/>
            <person name="Huson D.H."/>
            <person name="Kravitz S.A."/>
            <person name="Mouchard L."/>
            <person name="Reinert K."/>
            <person name="Remington K.A."/>
            <person name="Clark A.G."/>
            <person name="Waterman M.S."/>
            <person name="Eichler E.E."/>
            <person name="Adams M.D."/>
            <person name="Hunkapiller M.W."/>
            <person name="Myers E.W."/>
            <person name="Venter J.C."/>
        </authorList>
    </citation>
    <scope>NUCLEOTIDE SEQUENCE [LARGE SCALE GENOMIC DNA]</scope>
</reference>
<reference evidence="23" key="4">
    <citation type="journal article" date="2004" name="Genome Res.">
        <title>The status, quality, and expansion of the NIH full-length cDNA project: the Mammalian Gene Collection (MGC).</title>
        <authorList>
            <consortium name="The MGC Project Team"/>
        </authorList>
    </citation>
    <scope>NUCLEOTIDE SEQUENCE [LARGE SCALE MRNA] (ISOFORM 1)</scope>
    <source>
        <tissue>Testis</tissue>
    </source>
</reference>
<reference key="5">
    <citation type="journal article" date="1998" name="J. Biomed. Sci.">
        <title>From mosquito to man: identification of a novel protein kinase, HsHPK, which is highly expressed in human hepatoma tissues.</title>
        <authorList>
            <person name="Huang A.M."/>
            <person name="Chang T.J."/>
            <person name="Cho W.L."/>
            <person name="Chou C.K."/>
        </authorList>
    </citation>
    <scope>NUCLEOTIDE SEQUENCE [MRNA] OF 189-772 (ISOFORM 2/3)</scope>
    <scope>TISSUE SPECIFICITY</scope>
</reference>
<reference key="6">
    <citation type="journal article" date="1999" name="J. Biol. Chem.">
        <title>Nuclear localization of protein kinase U-alpha is regulated by 14-3-3.</title>
        <authorList>
            <person name="Zhang S."/>
            <person name="Xing H."/>
            <person name="Muslin A.J."/>
        </authorList>
    </citation>
    <scope>SUBCELLULAR LOCATION</scope>
    <scope>INTERACTION WITH YWHAZ</scope>
</reference>
<reference key="7">
    <citation type="journal article" date="2001" name="Curr. Biol.">
        <title>Identification of human Asf1 chromatin assembly factors as substrates of Tousled-like kinases.</title>
        <authorList>
            <person name="Sillje H.H.W."/>
            <person name="Nigg E.A."/>
        </authorList>
    </citation>
    <scope>FUNCTION</scope>
    <scope>MUTAGENESIS OF ASP-613</scope>
</reference>
<reference evidence="23" key="8">
    <citation type="journal article" date="2003" name="EMBO J.">
        <title>Human tousled like kinases are targeted by an ATM- and Chk1-dependent DNA damage checkpoint.</title>
        <authorList>
            <person name="Groth A."/>
            <person name="Lukas J."/>
            <person name="Nigg E.A."/>
            <person name="Sillje H.H.W."/>
            <person name="Wernstedt C."/>
            <person name="Bartek J."/>
            <person name="Hansen K."/>
        </authorList>
    </citation>
    <scope>FUNCTION</scope>
    <scope>ACTIVITY REGULATION</scope>
</reference>
<reference key="9">
    <citation type="journal article" date="2003" name="Oncogene">
        <title>Suppression of tousled-like kinase activity after DNA damage or replication block requires ATM, NBS1 and Chk1.</title>
        <authorList>
            <person name="Krause D.R."/>
            <person name="Jonnalagadda J.C."/>
            <person name="Gatei M.H."/>
            <person name="Sillje H.H.W."/>
            <person name="Zhou B.-B."/>
            <person name="Nigg E.A."/>
            <person name="Khanna K."/>
        </authorList>
    </citation>
    <scope>PHOSPHORYLATION AT SER-750</scope>
    <scope>FUNCTION</scope>
    <scope>ACTIVITY REGULATION</scope>
</reference>
<reference key="10">
    <citation type="journal article" date="2006" name="J. Biol. Chem.">
        <title>FEZ1 dimerization and interaction with transcription regulatory proteins involves its coiled-coil region.</title>
        <authorList>
            <person name="Assmann E.M."/>
            <person name="Alborghetti M.R."/>
            <person name="Camargo M.E.R."/>
            <person name="Kobarg J."/>
        </authorList>
    </citation>
    <scope>INTERACTION WITH FEZ1 AND FEZ2</scope>
</reference>
<reference key="11">
    <citation type="journal article" date="2008" name="Mol. Cell">
        <title>Kinase-selective enrichment enables quantitative phosphoproteomics of the kinome across the cell cycle.</title>
        <authorList>
            <person name="Daub H."/>
            <person name="Olsen J.V."/>
            <person name="Bairlein M."/>
            <person name="Gnad F."/>
            <person name="Oppermann F.S."/>
            <person name="Korner R."/>
            <person name="Greff Z."/>
            <person name="Keri G."/>
            <person name="Stemmann O."/>
            <person name="Mann M."/>
        </authorList>
    </citation>
    <scope>IDENTIFICATION BY MASS SPECTROMETRY [LARGE SCALE ANALYSIS]</scope>
    <source>
        <tissue>Cervix carcinoma</tissue>
    </source>
</reference>
<reference key="12">
    <citation type="journal article" date="2008" name="Proc. Natl. Acad. Sci. U.S.A.">
        <title>A quantitative atlas of mitotic phosphorylation.</title>
        <authorList>
            <person name="Dephoure N."/>
            <person name="Zhou C."/>
            <person name="Villen J."/>
            <person name="Beausoleil S.A."/>
            <person name="Bakalarski C.E."/>
            <person name="Elledge S.J."/>
            <person name="Gygi S.P."/>
        </authorList>
    </citation>
    <scope>PHOSPHORYLATION [LARGE SCALE ANALYSIS] AT SER-99</scope>
    <scope>IDENTIFICATION BY MASS SPECTROMETRY [LARGE SCALE ANALYSIS]</scope>
    <source>
        <tissue>Cervix carcinoma</tissue>
    </source>
</reference>
<reference key="13">
    <citation type="journal article" date="2009" name="Anal. Chem.">
        <title>Lys-N and trypsin cover complementary parts of the phosphoproteome in a refined SCX-based approach.</title>
        <authorList>
            <person name="Gauci S."/>
            <person name="Helbig A.O."/>
            <person name="Slijper M."/>
            <person name="Krijgsveld J."/>
            <person name="Heck A.J."/>
            <person name="Mohammed S."/>
        </authorList>
    </citation>
    <scope>IDENTIFICATION BY MASS SPECTROMETRY [LARGE SCALE ANALYSIS]</scope>
</reference>
<reference key="14">
    <citation type="journal article" date="2009" name="Mol. Cell. Proteomics">
        <title>Large-scale proteomics analysis of the human kinome.</title>
        <authorList>
            <person name="Oppermann F.S."/>
            <person name="Gnad F."/>
            <person name="Olsen J.V."/>
            <person name="Hornberger R."/>
            <person name="Greff Z."/>
            <person name="Keri G."/>
            <person name="Mann M."/>
            <person name="Daub H."/>
        </authorList>
    </citation>
    <scope>PHOSPHORYLATION [LARGE SCALE ANALYSIS] AT SER-94 AND SER-134</scope>
    <scope>IDENTIFICATION BY MASS SPECTROMETRY [LARGE SCALE ANALYSIS]</scope>
</reference>
<reference key="15">
    <citation type="journal article" date="2009" name="PLoS ONE">
        <title>Phosphorylation-mediated control of histone chaperone ASF1 levels by Tousled-like kinases.</title>
        <authorList>
            <person name="Pilyugin M."/>
            <person name="Demmers J."/>
            <person name="Verrijzer C.P."/>
            <person name="Karch F."/>
            <person name="Moshkin Y.M."/>
        </authorList>
    </citation>
    <scope>FUNCTION AS ASF1A AND ASF1B KINASE</scope>
    <scope>ACTIVITY REGULATION</scope>
</reference>
<reference key="16">
    <citation type="journal article" date="2009" name="Sci. Signal.">
        <title>Quantitative phosphoproteomic analysis of T cell receptor signaling reveals system-wide modulation of protein-protein interactions.</title>
        <authorList>
            <person name="Mayya V."/>
            <person name="Lundgren D.H."/>
            <person name="Hwang S.-I."/>
            <person name="Rezaul K."/>
            <person name="Wu L."/>
            <person name="Eng J.K."/>
            <person name="Rodionov V."/>
            <person name="Han D.K."/>
        </authorList>
    </citation>
    <scope>PHOSPHORYLATION [LARGE SCALE ANALYSIS] AT SER-99</scope>
    <scope>IDENTIFICATION BY MASS SPECTROMETRY [LARGE SCALE ANALYSIS]</scope>
    <source>
        <tissue>Leukemic T-cell</tissue>
    </source>
</reference>
<reference key="17">
    <citation type="journal article" date="2011" name="BMC Syst. Biol.">
        <title>Initial characterization of the human central proteome.</title>
        <authorList>
            <person name="Burkard T.R."/>
            <person name="Planyavsky M."/>
            <person name="Kaupe I."/>
            <person name="Breitwieser F.P."/>
            <person name="Buerckstuemmer T."/>
            <person name="Bennett K.L."/>
            <person name="Superti-Furga G."/>
            <person name="Colinge J."/>
        </authorList>
    </citation>
    <scope>IDENTIFICATION BY MASS SPECTROMETRY [LARGE SCALE ANALYSIS]</scope>
</reference>
<reference key="18">
    <citation type="journal article" date="2011" name="Sci. Signal.">
        <title>System-wide temporal characterization of the proteome and phosphoproteome of human embryonic stem cell differentiation.</title>
        <authorList>
            <person name="Rigbolt K.T."/>
            <person name="Prokhorova T.A."/>
            <person name="Akimov V."/>
            <person name="Henningsen J."/>
            <person name="Johansen P.T."/>
            <person name="Kratchmarova I."/>
            <person name="Kassem M."/>
            <person name="Mann M."/>
            <person name="Olsen J.V."/>
            <person name="Blagoev B."/>
        </authorList>
    </citation>
    <scope>IDENTIFICATION BY MASS SPECTROMETRY [LARGE SCALE ANALYSIS]</scope>
</reference>
<reference key="19">
    <citation type="journal article" date="2012" name="EMBO J.">
        <title>Genome-wide siRNA screen reveals amino acid starvation-induced autophagy requires SCOC and WAC.</title>
        <authorList>
            <person name="McKnight N.C."/>
            <person name="Jefferies H.B."/>
            <person name="Alemu E.A."/>
            <person name="Saunders R.E."/>
            <person name="Howell M."/>
            <person name="Johansen T."/>
            <person name="Tooze S.A."/>
        </authorList>
    </citation>
    <scope>FUNCTION</scope>
</reference>
<reference key="20">
    <citation type="journal article" date="2013" name="J. Proteome Res.">
        <title>Toward a comprehensive characterization of a human cancer cell phosphoproteome.</title>
        <authorList>
            <person name="Zhou H."/>
            <person name="Di Palma S."/>
            <person name="Preisinger C."/>
            <person name="Peng M."/>
            <person name="Polat A.N."/>
            <person name="Heck A.J."/>
            <person name="Mohammed S."/>
        </authorList>
    </citation>
    <scope>PHOSPHORYLATION [LARGE SCALE ANALYSIS] AT SER-73; SER-94; SER-99; SER-115; SER-117 AND SER-134</scope>
    <scope>IDENTIFICATION BY MASS SPECTROMETRY [LARGE SCALE ANALYSIS]</scope>
    <source>
        <tissue>Cervix carcinoma</tissue>
        <tissue>Erythroleukemia</tissue>
    </source>
</reference>
<reference key="21">
    <citation type="journal article" date="2014" name="J. Proteomics">
        <title>An enzyme assisted RP-RPLC approach for in-depth analysis of human liver phosphoproteome.</title>
        <authorList>
            <person name="Bian Y."/>
            <person name="Song C."/>
            <person name="Cheng K."/>
            <person name="Dong M."/>
            <person name="Wang F."/>
            <person name="Huang J."/>
            <person name="Sun D."/>
            <person name="Wang L."/>
            <person name="Ye M."/>
            <person name="Zou H."/>
        </authorList>
    </citation>
    <scope>IDENTIFICATION BY MASS SPECTROMETRY [LARGE SCALE ANALYSIS]</scope>
    <source>
        <tissue>Liver</tissue>
    </source>
</reference>
<reference evidence="26" key="22">
    <citation type="journal article" date="2018" name="Nat. Commun.">
        <title>Molecular basis of Tousled-Like Kinase 2 activation.</title>
        <authorList>
            <person name="Mortuza G.B."/>
            <person name="Hermida D."/>
            <person name="Pedersen A.K."/>
            <person name="Segura-Bayona S."/>
            <person name="Lopez-Mendez B."/>
            <person name="Redondo P."/>
            <person name="Ruther P."/>
            <person name="Pozdnyakova I."/>
            <person name="Garrote A.M."/>
            <person name="Munoz I.G."/>
            <person name="Villamor-Paya M."/>
            <person name="Jauset C."/>
            <person name="Olsen J.V."/>
            <person name="Stracker T.H."/>
            <person name="Montoya G."/>
        </authorList>
    </citation>
    <scope>X-RAY CRYSTALLOGRAPHY (2.86 ANGSTROMS) OF 191-755 IN COMPLEX WITH ATP</scope>
    <scope>FUNCTION</scope>
    <scope>SUBUNIT</scope>
    <scope>INTERACTION WITH DYNLL1/LC8 AND TLK1</scope>
    <scope>SUBCELLULAR LOCATION</scope>
    <scope>PHOSPHORYLATION</scope>
    <scope>CHARACTERIZATION OF VARIANTS MRD57 ARG-493; ARG-518 AND ASN-629</scope>
    <scope>MUTAGENESIS OF HIS-518; ASP-613; SER-617; SER-659; SER-686; THR-695 AND ARG-720</scope>
</reference>
<reference evidence="27" key="23">
    <citation type="journal article" date="2022" name="Nat. Commun.">
        <title>Tousled-like kinase 2 targets ASF1 histone chaperones through client mimicry.</title>
        <authorList>
            <person name="Simon B."/>
            <person name="Lou H.J."/>
            <person name="Huet-Calderwood C."/>
            <person name="Shi G."/>
            <person name="Boggon T.J."/>
            <person name="Turk B.E."/>
            <person name="Calderwood D.A."/>
        </authorList>
    </citation>
    <scope>X-RAY CRYSTALLOGRAPHY (2.71 ANGSTROMS) OF 3-23 IN COMPLEX WITH ASF1A</scope>
    <scope>FUNCTION</scope>
</reference>
<reference key="24">
    <citation type="journal article" date="2007" name="Nature">
        <title>Patterns of somatic mutation in human cancer genomes.</title>
        <authorList>
            <person name="Greenman C."/>
            <person name="Stephens P."/>
            <person name="Smith R."/>
            <person name="Dalgliesh G.L."/>
            <person name="Hunter C."/>
            <person name="Bignell G."/>
            <person name="Davies H."/>
            <person name="Teague J."/>
            <person name="Butler A."/>
            <person name="Stevens C."/>
            <person name="Edkins S."/>
            <person name="O'Meara S."/>
            <person name="Vastrik I."/>
            <person name="Schmidt E.E."/>
            <person name="Avis T."/>
            <person name="Barthorpe S."/>
            <person name="Bhamra G."/>
            <person name="Buck G."/>
            <person name="Choudhury B."/>
            <person name="Clements J."/>
            <person name="Cole J."/>
            <person name="Dicks E."/>
            <person name="Forbes S."/>
            <person name="Gray K."/>
            <person name="Halliday K."/>
            <person name="Harrison R."/>
            <person name="Hills K."/>
            <person name="Hinton J."/>
            <person name="Jenkinson A."/>
            <person name="Jones D."/>
            <person name="Menzies A."/>
            <person name="Mironenko T."/>
            <person name="Perry J."/>
            <person name="Raine K."/>
            <person name="Richardson D."/>
            <person name="Shepherd R."/>
            <person name="Small A."/>
            <person name="Tofts C."/>
            <person name="Varian J."/>
            <person name="Webb T."/>
            <person name="West S."/>
            <person name="Widaa S."/>
            <person name="Yates A."/>
            <person name="Cahill D.P."/>
            <person name="Louis D.N."/>
            <person name="Goldstraw P."/>
            <person name="Nicholson A.G."/>
            <person name="Brasseur F."/>
            <person name="Looijenga L."/>
            <person name="Weber B.L."/>
            <person name="Chiew Y.-E."/>
            <person name="DeFazio A."/>
            <person name="Greaves M.F."/>
            <person name="Green A.R."/>
            <person name="Campbell P."/>
            <person name="Birney E."/>
            <person name="Easton D.F."/>
            <person name="Chenevix-Trench G."/>
            <person name="Tan M.-H."/>
            <person name="Khoo S.K."/>
            <person name="Teh B.T."/>
            <person name="Yuen S.T."/>
            <person name="Leung S.Y."/>
            <person name="Wooster R."/>
            <person name="Futreal P.A."/>
            <person name="Stratton M.R."/>
        </authorList>
    </citation>
    <scope>VARIANTS [LARGE SCALE ANALYSIS] ARG-6; ASP-54; GLY-95; GLY-108; LEU-109; LEU-173 AND GLN-262</scope>
</reference>
<reference key="25">
    <citation type="journal article" date="2011" name="Nat. Genet.">
        <title>Exome sequencing in sporadic autism spectrum disorders identifies severe de novo mutations.</title>
        <authorList>
            <person name="O'Roak B.J."/>
            <person name="Deriziotis P."/>
            <person name="Lee C."/>
            <person name="Vives L."/>
            <person name="Schwartz J.J."/>
            <person name="Girirajan S."/>
            <person name="Karakoc E."/>
            <person name="Mackenzie A.P."/>
            <person name="Ng S.B."/>
            <person name="Baker C."/>
            <person name="Rieder M.J."/>
            <person name="Nickerson D.A."/>
            <person name="Bernier R."/>
            <person name="Fisher S.E."/>
            <person name="Shendure J."/>
            <person name="Eichler E.E."/>
        </authorList>
    </citation>
    <scope>VARIANT MRD57 LEU-617</scope>
</reference>
<reference key="26">
    <citation type="journal article" date="2016" name="Nat. Neurosci.">
        <title>Meta-analysis of 2,104 trios provides support for 10 new genes for intellectual disability.</title>
        <authorList>
            <person name="Lelieveld S.H."/>
            <person name="Reijnders M.R."/>
            <person name="Pfundt R."/>
            <person name="Yntema H.G."/>
            <person name="Kamsteeg E.J."/>
            <person name="de Vries P."/>
            <person name="de Vries B.B."/>
            <person name="Willemsen M.H."/>
            <person name="Kleefstra T."/>
            <person name="Loehner K."/>
            <person name="Vreeburg M."/>
            <person name="Stevens S.J."/>
            <person name="van der Burgt I."/>
            <person name="Bongers E.M."/>
            <person name="Stegmann A.P."/>
            <person name="Rump P."/>
            <person name="Rinne T."/>
            <person name="Nelen M.R."/>
            <person name="Veltman J.A."/>
            <person name="Vissers L.E."/>
            <person name="Brunner H.G."/>
            <person name="Gilissen C."/>
        </authorList>
    </citation>
    <scope>VARIANT MRD57 720-ARG--ASN-772 DEL</scope>
    <scope>INVOLVEMENT IN MRD57</scope>
</reference>
<reference key="27">
    <citation type="journal article" date="2018" name="Am. J. Hum. Genet.">
        <title>De Novo and Inherited Loss-of-Function Variants in TLK2: Clinical and Genotype-Phenotype Evaluation of a Distinct Neurodevelopmental Disorder.</title>
        <authorList>
            <consortium name="Deciphering Developmental Disorders Study"/>
            <person name="Reijnders M.R.F."/>
            <person name="Miller K.A."/>
            <person name="Alvi M."/>
            <person name="Goos J.A.C."/>
            <person name="Lees M.M."/>
            <person name="de Burca A."/>
            <person name="Henderson A."/>
            <person name="Kraus A."/>
            <person name="Mikat B."/>
            <person name="de Vries B.B.A."/>
            <person name="Isidor B."/>
            <person name="Kerr B."/>
            <person name="Marcelis C."/>
            <person name="Schluth-Bolard C."/>
            <person name="Deshpande C."/>
            <person name="Ruivenkamp C.A.L."/>
            <person name="Wieczorek D."/>
            <person name="Baralle D."/>
            <person name="Blair E.M."/>
            <person name="Engels H."/>
            <person name="Luedecke H.J."/>
            <person name="Eason J."/>
            <person name="Santen G.W.E."/>
            <person name="Clayton-Smith J."/>
            <person name="Chandler K."/>
            <person name="Tatton-Brown K."/>
            <person name="Payne K."/>
            <person name="Helbig K."/>
            <person name="Radtke K."/>
            <person name="Nugent K.M."/>
            <person name="Cremer K."/>
            <person name="Strom T.M."/>
            <person name="Bird L.M."/>
            <person name="Sinnema M."/>
            <person name="Bitner-Glindzicz M."/>
            <person name="van Dooren M.F."/>
            <person name="Alders M."/>
            <person name="Koopmans M."/>
            <person name="Brick L."/>
            <person name="Kozenko M."/>
            <person name="Harline M.L."/>
            <person name="Klaassens M."/>
            <person name="Steinraths M."/>
            <person name="Cooper N.S."/>
            <person name="Edery P."/>
            <person name="Yap P."/>
            <person name="Terhal P.A."/>
            <person name="van der Spek P.J."/>
            <person name="Lakeman P."/>
            <person name="Taylor R.L."/>
            <person name="Littlejohn R.O."/>
            <person name="Pfundt R."/>
            <person name="Mercimek-Andrews S."/>
            <person name="Stegmann A.P.A."/>
            <person name="Kant S.G."/>
            <person name="McLean S."/>
            <person name="Joss S."/>
            <person name="Swagemakers S.M.A."/>
            <person name="Douzgou S."/>
            <person name="Wall S.A."/>
            <person name="Kuery S."/>
            <person name="Calpena E."/>
            <person name="Koelling N."/>
            <person name="McGowan S.J."/>
            <person name="Twigg S.R.F."/>
            <person name="Mathijssen I.M.J."/>
            <person name="Nellaker C."/>
            <person name="Brunner H.G."/>
            <person name="Wilkie A.O.M."/>
        </authorList>
    </citation>
    <scope>VARIANTS MRD57 13-GLN--ASN-772 DEL; 61-ARG--ASN-772 DEL; 68-GLU--ASN-772 DEL; 259-TYR--ASN-772 DEL; 262-ARG--ASN-772 DEL; ASP-297; 303-ARG--ASN-772 DEL; 330-SER--ASN-772 DEL; GLN-339; TRP-339; LYS-447; ARG-493; ARG-518; TRP-568; 573-GLN--ASN-772 DEL; ASN-629; ARG-680; 720-ARG--ASN-772 DEL AND 746-ARG--ASN-772 DEL</scope>
    <scope>INVOLVEMENT IN MRD57</scope>
</reference>
<reference key="28">
    <citation type="journal article" date="2022" name="J. Med. Genet.">
        <title>Functional analysis of TLK2 variants and their proximal interactomes implicates impaired kinase activity and chromatin maintenance defects in their pathogenesis.</title>
        <authorList>
            <person name="Pavinato L."/>
            <person name="Villamor-Paya M."/>
            <person name="Sanchiz-Calvo M."/>
            <person name="Andreoli C."/>
            <person name="Gay M."/>
            <person name="Vilaseca M."/>
            <person name="Arauz-Garofalo G."/>
            <person name="Ciolfi A."/>
            <person name="Bruselles A."/>
            <person name="Pippucci T."/>
            <person name="Prota V."/>
            <person name="Carli D."/>
            <person name="Giorgio E."/>
            <person name="Radio F.C."/>
            <person name="Antona V."/>
            <person name="Giuffre M."/>
            <person name="Ranguin K."/>
            <person name="Colson C."/>
            <person name="De Rubeis S."/>
            <person name="Dimartino P."/>
            <person name="Buxbaum J.D."/>
            <person name="Ferrero G.B."/>
            <person name="Tartaglia M."/>
            <person name="Martinelli S."/>
            <person name="Stracker T.H."/>
            <person name="Brusco A."/>
        </authorList>
    </citation>
    <scope>VARIANTS MRD57 475-GLU--ASN-772 DEL AND GLY-551</scope>
    <scope>CHARACTERIZATION OF VARIANTS MRD57 GLY-551 AND LEU-617</scope>
    <scope>FUNCTION</scope>
    <scope>SUBCELLULAR LOCATION</scope>
    <scope>INTERACTION WITH TLK1; CHD7; CHD8 AND DYNLL1/LC8</scope>
    <scope>MUTAGENESIS OF ASP-592</scope>
</reference>
<accession>Q86UE8</accession>
<accession>D3DU07</accession>
<accession>Q9UKI7</accession>
<accession>Q9Y4F7</accession>
<protein>
    <recommendedName>
        <fullName>Serine/threonine-protein kinase tousled-like 2</fullName>
        <ecNumber evidence="5 7 19">2.7.11.1</ecNumber>
    </recommendedName>
    <alternativeName>
        <fullName>HsHPK</fullName>
    </alternativeName>
    <alternativeName>
        <fullName evidence="22">PKU-alpha</fullName>
    </alternativeName>
    <alternativeName>
        <fullName evidence="21">Tousled-like kinase 2</fullName>
    </alternativeName>
</protein>
<dbReference type="EC" id="2.7.11.1" evidence="5 7 19"/>
<dbReference type="EMBL" id="AB004884">
    <property type="protein sequence ID" value="BAA20561.1"/>
    <property type="status" value="ALT_INIT"/>
    <property type="molecule type" value="mRNA"/>
</dbReference>
<dbReference type="EMBL" id="AF162667">
    <property type="protein sequence ID" value="AAF03095.1"/>
    <property type="status" value="ALT_INIT"/>
    <property type="molecule type" value="mRNA"/>
</dbReference>
<dbReference type="EMBL" id="CH471109">
    <property type="protein sequence ID" value="EAW94346.1"/>
    <property type="molecule type" value="Genomic_DNA"/>
</dbReference>
<dbReference type="EMBL" id="CH471109">
    <property type="protein sequence ID" value="EAW94348.1"/>
    <property type="molecule type" value="Genomic_DNA"/>
</dbReference>
<dbReference type="EMBL" id="BC044925">
    <property type="protein sequence ID" value="AAH44925.2"/>
    <property type="status" value="ALT_INIT"/>
    <property type="molecule type" value="mRNA"/>
</dbReference>
<dbReference type="CCDS" id="CCDS11633.1">
    <molecule id="Q86UE8-2"/>
</dbReference>
<dbReference type="CCDS" id="CCDS45753.1">
    <molecule id="Q86UE8-3"/>
</dbReference>
<dbReference type="CCDS" id="CCDS62283.1">
    <molecule id="Q86UE8-1"/>
</dbReference>
<dbReference type="RefSeq" id="NP_001271262.1">
    <molecule id="Q86UE8-1"/>
    <property type="nucleotide sequence ID" value="NM_001284333.3"/>
</dbReference>
<dbReference type="RefSeq" id="NP_001271292.1">
    <molecule id="Q86UE8-3"/>
    <property type="nucleotide sequence ID" value="NM_001284363.1"/>
</dbReference>
<dbReference type="RefSeq" id="NP_001362199.1">
    <molecule id="Q86UE8-2"/>
    <property type="nucleotide sequence ID" value="NM_001375270.1"/>
</dbReference>
<dbReference type="RefSeq" id="NP_001362200.1">
    <molecule id="Q86UE8-2"/>
    <property type="nucleotide sequence ID" value="NM_001375271.1"/>
</dbReference>
<dbReference type="RefSeq" id="NP_001362201.1">
    <molecule id="Q86UE8-3"/>
    <property type="nucleotide sequence ID" value="NM_001375272.1"/>
</dbReference>
<dbReference type="RefSeq" id="NP_006843.2">
    <molecule id="Q86UE8-2"/>
    <property type="nucleotide sequence ID" value="NM_006852.3"/>
</dbReference>
<dbReference type="RefSeq" id="XP_011522518.1">
    <molecule id="Q86UE8-1"/>
    <property type="nucleotide sequence ID" value="XM_011524216.3"/>
</dbReference>
<dbReference type="RefSeq" id="XP_011522519.1">
    <property type="nucleotide sequence ID" value="XM_011524217.2"/>
</dbReference>
<dbReference type="RefSeq" id="XP_011522524.1">
    <molecule id="Q86UE8-1"/>
    <property type="nucleotide sequence ID" value="XM_011524222.4"/>
</dbReference>
<dbReference type="RefSeq" id="XP_016879533.1">
    <property type="nucleotide sequence ID" value="XM_017024044.1"/>
</dbReference>
<dbReference type="RefSeq" id="XP_016879535.1">
    <property type="nucleotide sequence ID" value="XM_017024046.1"/>
</dbReference>
<dbReference type="RefSeq" id="XP_016879536.1">
    <property type="nucleotide sequence ID" value="XM_017024047.1"/>
</dbReference>
<dbReference type="RefSeq" id="XP_016879540.1">
    <molecule id="Q86UE8-3"/>
    <property type="nucleotide sequence ID" value="XM_017024051.3"/>
</dbReference>
<dbReference type="RefSeq" id="XP_016879541.1">
    <property type="nucleotide sequence ID" value="XM_017024052.1"/>
</dbReference>
<dbReference type="RefSeq" id="XP_016879542.1">
    <molecule id="Q86UE8-3"/>
    <property type="nucleotide sequence ID" value="XM_017024053.3"/>
</dbReference>
<dbReference type="RefSeq" id="XP_024306321.1">
    <molecule id="Q86UE8-1"/>
    <property type="nucleotide sequence ID" value="XM_024450553.2"/>
</dbReference>
<dbReference type="RefSeq" id="XP_047291135.1">
    <molecule id="Q86UE8-2"/>
    <property type="nucleotide sequence ID" value="XM_047435179.1"/>
</dbReference>
<dbReference type="RefSeq" id="XP_047291138.1">
    <molecule id="Q86UE8-3"/>
    <property type="nucleotide sequence ID" value="XM_047435182.1"/>
</dbReference>
<dbReference type="RefSeq" id="XP_054170761.1">
    <molecule id="Q86UE8-1"/>
    <property type="nucleotide sequence ID" value="XM_054314786.1"/>
</dbReference>
<dbReference type="RefSeq" id="XP_054170762.1">
    <molecule id="Q86UE8-1"/>
    <property type="nucleotide sequence ID" value="XM_054314787.1"/>
</dbReference>
<dbReference type="RefSeq" id="XP_054170763.1">
    <molecule id="Q86UE8-1"/>
    <property type="nucleotide sequence ID" value="XM_054314788.1"/>
</dbReference>
<dbReference type="RefSeq" id="XP_054170767.1">
    <molecule id="Q86UE8-2"/>
    <property type="nucleotide sequence ID" value="XM_054314792.1"/>
</dbReference>
<dbReference type="RefSeq" id="XP_054170774.1">
    <molecule id="Q86UE8-3"/>
    <property type="nucleotide sequence ID" value="XM_054314799.1"/>
</dbReference>
<dbReference type="RefSeq" id="XP_054170775.1">
    <molecule id="Q86UE8-3"/>
    <property type="nucleotide sequence ID" value="XM_054314800.1"/>
</dbReference>
<dbReference type="RefSeq" id="XP_054170776.1">
    <molecule id="Q86UE8-3"/>
    <property type="nucleotide sequence ID" value="XM_054314801.1"/>
</dbReference>
<dbReference type="PDB" id="5O0Y">
    <property type="method" value="X-ray"/>
    <property type="resolution" value="2.86 A"/>
    <property type="chains" value="A=191-755"/>
</dbReference>
<dbReference type="PDB" id="7LO0">
    <property type="method" value="X-ray"/>
    <property type="resolution" value="2.71 A"/>
    <property type="chains" value="I/J/K/L/M/N/O/P/Q/R/T/U/V/W/X/Y=3-23"/>
</dbReference>
<dbReference type="PDBsum" id="5O0Y"/>
<dbReference type="PDBsum" id="7LO0"/>
<dbReference type="SMR" id="Q86UE8"/>
<dbReference type="BioGRID" id="116201">
    <property type="interactions" value="108"/>
</dbReference>
<dbReference type="FunCoup" id="Q86UE8">
    <property type="interactions" value="4227"/>
</dbReference>
<dbReference type="IntAct" id="Q86UE8">
    <property type="interactions" value="213"/>
</dbReference>
<dbReference type="MINT" id="Q86UE8"/>
<dbReference type="STRING" id="9606.ENSP00000316512"/>
<dbReference type="BindingDB" id="Q86UE8"/>
<dbReference type="ChEMBL" id="CHEMBL5404"/>
<dbReference type="DrugBank" id="DB12010">
    <property type="generic name" value="Fostamatinib"/>
</dbReference>
<dbReference type="DrugCentral" id="Q86UE8"/>
<dbReference type="GlyGen" id="Q86UE8">
    <property type="glycosylation" value="1 site, 1 O-linked glycan (1 site)"/>
</dbReference>
<dbReference type="iPTMnet" id="Q86UE8"/>
<dbReference type="PhosphoSitePlus" id="Q86UE8"/>
<dbReference type="BioMuta" id="TLK2"/>
<dbReference type="DMDM" id="34222826"/>
<dbReference type="CPTAC" id="non-CPTAC-5682"/>
<dbReference type="CPTAC" id="non-CPTAC-5683"/>
<dbReference type="jPOST" id="Q86UE8"/>
<dbReference type="MassIVE" id="Q86UE8"/>
<dbReference type="PaxDb" id="9606-ENSP00000316512"/>
<dbReference type="PeptideAtlas" id="Q86UE8"/>
<dbReference type="ProteomicsDB" id="69811">
    <molecule id="Q86UE8-1"/>
</dbReference>
<dbReference type="ProteomicsDB" id="69812">
    <molecule id="Q86UE8-2"/>
</dbReference>
<dbReference type="ProteomicsDB" id="69813">
    <molecule id="Q86UE8-3"/>
</dbReference>
<dbReference type="Pumba" id="Q86UE8"/>
<dbReference type="Antibodypedia" id="31236">
    <property type="antibodies" value="371 antibodies from 31 providers"/>
</dbReference>
<dbReference type="DNASU" id="11011"/>
<dbReference type="Ensembl" id="ENST00000326270.13">
    <molecule id="Q86UE8-1"/>
    <property type="protein sequence ID" value="ENSP00000316512.9"/>
    <property type="gene ID" value="ENSG00000146872.19"/>
</dbReference>
<dbReference type="Ensembl" id="ENST00000343388.11">
    <molecule id="Q86UE8-3"/>
    <property type="protein sequence ID" value="ENSP00000340800.7"/>
    <property type="gene ID" value="ENSG00000146872.19"/>
</dbReference>
<dbReference type="Ensembl" id="ENST00000346027.10">
    <molecule id="Q86UE8-2"/>
    <property type="protein sequence ID" value="ENSP00000275780.7"/>
    <property type="gene ID" value="ENSG00000146872.19"/>
</dbReference>
<dbReference type="Ensembl" id="ENST00000682085.1">
    <molecule id="Q86UE8-2"/>
    <property type="protein sequence ID" value="ENSP00000506744.1"/>
    <property type="gene ID" value="ENSG00000146872.19"/>
</dbReference>
<dbReference type="Ensembl" id="ENST00000683104.1">
    <molecule id="Q86UE8-3"/>
    <property type="protein sequence ID" value="ENSP00000508242.1"/>
    <property type="gene ID" value="ENSG00000146872.19"/>
</dbReference>
<dbReference type="GeneID" id="11011"/>
<dbReference type="KEGG" id="hsa:11011"/>
<dbReference type="MANE-Select" id="ENST00000346027.10">
    <molecule id="Q86UE8-2"/>
    <property type="protein sequence ID" value="ENSP00000275780.7"/>
    <property type="RefSeq nucleotide sequence ID" value="NM_006852.6"/>
    <property type="RefSeq protein sequence ID" value="NP_006843.2"/>
</dbReference>
<dbReference type="UCSC" id="uc002izz.5">
    <molecule id="Q86UE8-1"/>
    <property type="organism name" value="human"/>
</dbReference>
<dbReference type="AGR" id="HGNC:11842"/>
<dbReference type="CTD" id="11011"/>
<dbReference type="DisGeNET" id="11011"/>
<dbReference type="GeneCards" id="TLK2"/>
<dbReference type="HGNC" id="HGNC:11842">
    <property type="gene designation" value="TLK2"/>
</dbReference>
<dbReference type="HPA" id="ENSG00000146872">
    <property type="expression patterns" value="Low tissue specificity"/>
</dbReference>
<dbReference type="MalaCards" id="TLK2"/>
<dbReference type="MIM" id="608439">
    <property type="type" value="gene"/>
</dbReference>
<dbReference type="MIM" id="618050">
    <property type="type" value="phenotype"/>
</dbReference>
<dbReference type="neXtProt" id="NX_Q86UE8"/>
<dbReference type="OpenTargets" id="ENSG00000146872"/>
<dbReference type="PharmGKB" id="PA36544"/>
<dbReference type="VEuPathDB" id="HostDB:ENSG00000146872"/>
<dbReference type="eggNOG" id="KOG1151">
    <property type="taxonomic scope" value="Eukaryota"/>
</dbReference>
<dbReference type="GeneTree" id="ENSGT00950000182984"/>
<dbReference type="InParanoid" id="Q86UE8"/>
<dbReference type="OMA" id="LPSMTWQ"/>
<dbReference type="OrthoDB" id="346907at2759"/>
<dbReference type="PAN-GO" id="Q86UE8">
    <property type="GO annotations" value="5 GO annotations based on evolutionary models"/>
</dbReference>
<dbReference type="PhylomeDB" id="Q86UE8"/>
<dbReference type="TreeFam" id="TF315233"/>
<dbReference type="PathwayCommons" id="Q86UE8"/>
<dbReference type="SignaLink" id="Q86UE8"/>
<dbReference type="SIGNOR" id="Q86UE8"/>
<dbReference type="BioGRID-ORCS" id="11011">
    <property type="hits" value="259 hits in 1157 CRISPR screens"/>
</dbReference>
<dbReference type="CD-CODE" id="DEE660B4">
    <property type="entry name" value="Stress granule"/>
</dbReference>
<dbReference type="ChiTaRS" id="TLK2">
    <property type="organism name" value="human"/>
</dbReference>
<dbReference type="GeneWiki" id="TLK2"/>
<dbReference type="GenomeRNAi" id="11011"/>
<dbReference type="Pharos" id="Q86UE8">
    <property type="development level" value="Tchem"/>
</dbReference>
<dbReference type="PRO" id="PR:Q86UE8"/>
<dbReference type="Proteomes" id="UP000005640">
    <property type="component" value="Chromosome 17"/>
</dbReference>
<dbReference type="RNAct" id="Q86UE8">
    <property type="molecule type" value="protein"/>
</dbReference>
<dbReference type="Bgee" id="ENSG00000146872">
    <property type="expression patterns" value="Expressed in calcaneal tendon and 115 other cell types or tissues"/>
</dbReference>
<dbReference type="ExpressionAtlas" id="Q86UE8">
    <property type="expression patterns" value="baseline and differential"/>
</dbReference>
<dbReference type="GO" id="GO:0005882">
    <property type="term" value="C:intermediate filament"/>
    <property type="evidence" value="ECO:0000314"/>
    <property type="project" value="UniProtKB"/>
</dbReference>
<dbReference type="GO" id="GO:0005654">
    <property type="term" value="C:nucleoplasm"/>
    <property type="evidence" value="ECO:0007669"/>
    <property type="project" value="UniProtKB-SubCell"/>
</dbReference>
<dbReference type="GO" id="GO:0005634">
    <property type="term" value="C:nucleus"/>
    <property type="evidence" value="ECO:0000314"/>
    <property type="project" value="UniProtKB"/>
</dbReference>
<dbReference type="GO" id="GO:0048471">
    <property type="term" value="C:perinuclear region of cytoplasm"/>
    <property type="evidence" value="ECO:0000314"/>
    <property type="project" value="UniProtKB"/>
</dbReference>
<dbReference type="GO" id="GO:0005524">
    <property type="term" value="F:ATP binding"/>
    <property type="evidence" value="ECO:0000314"/>
    <property type="project" value="UniProtKB"/>
</dbReference>
<dbReference type="GO" id="GO:0042802">
    <property type="term" value="F:identical protein binding"/>
    <property type="evidence" value="ECO:0000353"/>
    <property type="project" value="IntAct"/>
</dbReference>
<dbReference type="GO" id="GO:0106310">
    <property type="term" value="F:protein serine kinase activity"/>
    <property type="evidence" value="ECO:0007669"/>
    <property type="project" value="RHEA"/>
</dbReference>
<dbReference type="GO" id="GO:0004674">
    <property type="term" value="F:protein serine/threonine kinase activity"/>
    <property type="evidence" value="ECO:0000314"/>
    <property type="project" value="UniProtKB"/>
</dbReference>
<dbReference type="GO" id="GO:0071480">
    <property type="term" value="P:cellular response to gamma radiation"/>
    <property type="evidence" value="ECO:0000314"/>
    <property type="project" value="UniProtKB"/>
</dbReference>
<dbReference type="GO" id="GO:0006325">
    <property type="term" value="P:chromatin organization"/>
    <property type="evidence" value="ECO:0007669"/>
    <property type="project" value="UniProtKB-KW"/>
</dbReference>
<dbReference type="GO" id="GO:0007059">
    <property type="term" value="P:chromosome segregation"/>
    <property type="evidence" value="ECO:0000315"/>
    <property type="project" value="UniProtKB"/>
</dbReference>
<dbReference type="GO" id="GO:0006974">
    <property type="term" value="P:DNA damage response"/>
    <property type="evidence" value="ECO:0000314"/>
    <property type="project" value="UniProtKB"/>
</dbReference>
<dbReference type="GO" id="GO:0035556">
    <property type="term" value="P:intracellular signal transduction"/>
    <property type="evidence" value="ECO:0000314"/>
    <property type="project" value="UniProtKB"/>
</dbReference>
<dbReference type="GO" id="GO:0010507">
    <property type="term" value="P:negative regulation of autophagy"/>
    <property type="evidence" value="ECO:0000303"/>
    <property type="project" value="BHF-UCL"/>
</dbReference>
<dbReference type="GO" id="GO:0032435">
    <property type="term" value="P:negative regulation of proteasomal ubiquitin-dependent protein catabolic process"/>
    <property type="evidence" value="ECO:0000315"/>
    <property type="project" value="UniProtKB"/>
</dbReference>
<dbReference type="GO" id="GO:0051647">
    <property type="term" value="P:nucleus localization"/>
    <property type="evidence" value="ECO:0000315"/>
    <property type="project" value="DisProt"/>
</dbReference>
<dbReference type="GO" id="GO:0018105">
    <property type="term" value="P:peptidyl-serine phosphorylation"/>
    <property type="evidence" value="ECO:0000314"/>
    <property type="project" value="UniProtKB"/>
</dbReference>
<dbReference type="GO" id="GO:0006468">
    <property type="term" value="P:protein phosphorylation"/>
    <property type="evidence" value="ECO:0000314"/>
    <property type="project" value="UniProtKB"/>
</dbReference>
<dbReference type="GO" id="GO:1902275">
    <property type="term" value="P:regulation of chromatin organization"/>
    <property type="evidence" value="ECO:0000314"/>
    <property type="project" value="UniProtKB"/>
</dbReference>
<dbReference type="CDD" id="cd14041">
    <property type="entry name" value="STKc_TLK2"/>
    <property type="match status" value="1"/>
</dbReference>
<dbReference type="DisProt" id="DP02475"/>
<dbReference type="FunFam" id="1.10.510.10:FF:000037">
    <property type="entry name" value="Serine/threonine-protein kinase tousled-like 2"/>
    <property type="match status" value="1"/>
</dbReference>
<dbReference type="Gene3D" id="1.10.510.10">
    <property type="entry name" value="Transferase(Phosphotransferase) domain 1"/>
    <property type="match status" value="1"/>
</dbReference>
<dbReference type="InterPro" id="IPR011009">
    <property type="entry name" value="Kinase-like_dom_sf"/>
</dbReference>
<dbReference type="InterPro" id="IPR000719">
    <property type="entry name" value="Prot_kinase_dom"/>
</dbReference>
<dbReference type="InterPro" id="IPR017441">
    <property type="entry name" value="Protein_kinase_ATP_BS"/>
</dbReference>
<dbReference type="InterPro" id="IPR008271">
    <property type="entry name" value="Ser/Thr_kinase_AS"/>
</dbReference>
<dbReference type="PANTHER" id="PTHR22974">
    <property type="entry name" value="MIXED LINEAGE PROTEIN KINASE"/>
    <property type="match status" value="1"/>
</dbReference>
<dbReference type="PANTHER" id="PTHR22974:SF20">
    <property type="entry name" value="SERINE_THREONINE-PROTEIN KINASE TOUSLED-LIKE 2"/>
    <property type="match status" value="1"/>
</dbReference>
<dbReference type="Pfam" id="PF00069">
    <property type="entry name" value="Pkinase"/>
    <property type="match status" value="1"/>
</dbReference>
<dbReference type="SMART" id="SM00220">
    <property type="entry name" value="S_TKc"/>
    <property type="match status" value="1"/>
</dbReference>
<dbReference type="SUPFAM" id="SSF56112">
    <property type="entry name" value="Protein kinase-like (PK-like)"/>
    <property type="match status" value="1"/>
</dbReference>
<dbReference type="PROSITE" id="PS00107">
    <property type="entry name" value="PROTEIN_KINASE_ATP"/>
    <property type="match status" value="1"/>
</dbReference>
<dbReference type="PROSITE" id="PS50011">
    <property type="entry name" value="PROTEIN_KINASE_DOM"/>
    <property type="match status" value="1"/>
</dbReference>
<dbReference type="PROSITE" id="PS00108">
    <property type="entry name" value="PROTEIN_KINASE_ST"/>
    <property type="match status" value="1"/>
</dbReference>
<evidence type="ECO:0000255" key="1"/>
<evidence type="ECO:0000255" key="2">
    <source>
        <dbReference type="PROSITE-ProRule" id="PRU00159"/>
    </source>
</evidence>
<evidence type="ECO:0000256" key="3">
    <source>
        <dbReference type="SAM" id="MobiDB-lite"/>
    </source>
</evidence>
<evidence type="ECO:0000269" key="4">
    <source>
    </source>
</evidence>
<evidence type="ECO:0000269" key="5">
    <source>
    </source>
</evidence>
<evidence type="ECO:0000269" key="6">
    <source>
    </source>
</evidence>
<evidence type="ECO:0000269" key="7">
    <source>
    </source>
</evidence>
<evidence type="ECO:0000269" key="8">
    <source>
    </source>
</evidence>
<evidence type="ECO:0000269" key="9">
    <source>
    </source>
</evidence>
<evidence type="ECO:0000269" key="10">
    <source>
    </source>
</evidence>
<evidence type="ECO:0000269" key="11">
    <source>
    </source>
</evidence>
<evidence type="ECO:0000269" key="12">
    <source>
    </source>
</evidence>
<evidence type="ECO:0000269" key="13">
    <source>
    </source>
</evidence>
<evidence type="ECO:0000269" key="14">
    <source>
    </source>
</evidence>
<evidence type="ECO:0000269" key="15">
    <source>
    </source>
</evidence>
<evidence type="ECO:0000269" key="16">
    <source>
    </source>
</evidence>
<evidence type="ECO:0000269" key="17">
    <source>
    </source>
</evidence>
<evidence type="ECO:0000269" key="18">
    <source>
    </source>
</evidence>
<evidence type="ECO:0000269" key="19">
    <source>
    </source>
</evidence>
<evidence type="ECO:0000269" key="20">
    <source>
    </source>
</evidence>
<evidence type="ECO:0000303" key="21">
    <source>
    </source>
</evidence>
<evidence type="ECO:0000303" key="22">
    <source>
    </source>
</evidence>
<evidence type="ECO:0000305" key="23"/>
<evidence type="ECO:0000305" key="24">
    <source>
    </source>
</evidence>
<evidence type="ECO:0000312" key="25">
    <source>
        <dbReference type="HGNC" id="HGNC:11842"/>
    </source>
</evidence>
<evidence type="ECO:0007744" key="26">
    <source>
        <dbReference type="PDB" id="5O0Y"/>
    </source>
</evidence>
<evidence type="ECO:0007744" key="27">
    <source>
        <dbReference type="PDB" id="7LO0"/>
    </source>
</evidence>
<evidence type="ECO:0007744" key="28">
    <source>
    </source>
</evidence>
<evidence type="ECO:0007744" key="29">
    <source>
    </source>
</evidence>
<evidence type="ECO:0007744" key="30">
    <source>
    </source>
</evidence>
<evidence type="ECO:0007744" key="31">
    <source>
    </source>
</evidence>
<evidence type="ECO:0007829" key="32">
    <source>
        <dbReference type="PDB" id="5O0Y"/>
    </source>
</evidence>
<evidence type="ECO:0007829" key="33">
    <source>
        <dbReference type="PDB" id="7LO0"/>
    </source>
</evidence>
<name>TLK2_HUMAN</name>
<keyword id="KW-0002">3D-structure</keyword>
<keyword id="KW-0025">Alternative splicing</keyword>
<keyword id="KW-0067">ATP-binding</keyword>
<keyword id="KW-0131">Cell cycle</keyword>
<keyword id="KW-0156">Chromatin regulator</keyword>
<keyword id="KW-0175">Coiled coil</keyword>
<keyword id="KW-0963">Cytoplasm</keyword>
<keyword id="KW-0206">Cytoskeleton</keyword>
<keyword id="KW-0225">Disease variant</keyword>
<keyword id="KW-0227">DNA damage</keyword>
<keyword id="KW-0991">Intellectual disability</keyword>
<keyword id="KW-0418">Kinase</keyword>
<keyword id="KW-0547">Nucleotide-binding</keyword>
<keyword id="KW-0539">Nucleus</keyword>
<keyword id="KW-0597">Phosphoprotein</keyword>
<keyword id="KW-1267">Proteomics identification</keyword>
<keyword id="KW-1185">Reference proteome</keyword>
<keyword id="KW-0723">Serine/threonine-protein kinase</keyword>
<keyword id="KW-0808">Transferase</keyword>
<comment type="function">
    <text evidence="5 6 7 8 11 13 16 17 18 19">Serine/threonine-protein kinase involved in the process of chromatin assembly and probably also DNA replication, transcription, repair, and chromosome segregation (PubMed:10523312, PubMed:11470414, PubMed:12660173, PubMed:12955071, PubMed:29955062, PubMed:33323470, PubMed:9427565). Phosphorylates the chromatin assembly factors ASF1A and ASF1B (PubMed:11470414, PubMed:20016786, PubMed:29955062, PubMed:35136069). Phosphorylation of ASF1A prevents its proteasome-mediated degradation, thereby enhancing chromatin assembly (PubMed:20016786). Negative regulator of amino acid starvation-induced autophagy (PubMed:22354037).</text>
</comment>
<comment type="catalytic activity">
    <reaction evidence="5 7 19">
        <text>L-seryl-[protein] + ATP = O-phospho-L-seryl-[protein] + ADP + H(+)</text>
        <dbReference type="Rhea" id="RHEA:17989"/>
        <dbReference type="Rhea" id="RHEA-COMP:9863"/>
        <dbReference type="Rhea" id="RHEA-COMP:11604"/>
        <dbReference type="ChEBI" id="CHEBI:15378"/>
        <dbReference type="ChEBI" id="CHEBI:29999"/>
        <dbReference type="ChEBI" id="CHEBI:30616"/>
        <dbReference type="ChEBI" id="CHEBI:83421"/>
        <dbReference type="ChEBI" id="CHEBI:456216"/>
        <dbReference type="EC" id="2.7.11.1"/>
    </reaction>
</comment>
<comment type="catalytic activity">
    <reaction evidence="5 7 19">
        <text>L-threonyl-[protein] + ATP = O-phospho-L-threonyl-[protein] + ADP + H(+)</text>
        <dbReference type="Rhea" id="RHEA:46608"/>
        <dbReference type="Rhea" id="RHEA-COMP:11060"/>
        <dbReference type="Rhea" id="RHEA-COMP:11605"/>
        <dbReference type="ChEBI" id="CHEBI:15378"/>
        <dbReference type="ChEBI" id="CHEBI:30013"/>
        <dbReference type="ChEBI" id="CHEBI:30616"/>
        <dbReference type="ChEBI" id="CHEBI:61977"/>
        <dbReference type="ChEBI" id="CHEBI:456216"/>
        <dbReference type="EC" id="2.7.11.1"/>
    </reaction>
</comment>
<comment type="cofactor">
    <cofactor evidence="5 7 19">
        <name>Mg(2+)</name>
        <dbReference type="ChEBI" id="CHEBI:18420"/>
    </cofactor>
</comment>
<comment type="activity regulation">
    <text evidence="5 7 8 11">Cell cycle-regulated, with maximal activity in the S-phase (PubMed:10523312, PubMed:20016786). Rapidly and transiently inhibited by phosphorylation following the generation of DNA double-stranded breaks during S-phase, probably by CHEK1, possibly at Ser-750 (PubMed:12660173, PubMed:12955071). This inhibition is cell cycle checkpoint- and ATM-dependent (PubMed:12955071).</text>
</comment>
<comment type="subunit">
    <text evidence="4 5 9 16 17">Monomer (PubMed:29955062). May form homodimers; homodimerization may enhance autophosphoylation and enzymatic activity (PubMed:29955062). Heterodimer with TLK1 (PubMed:10523312, PubMed:29955062, PubMed:33323470). Interacts with YWHAZ; association with 14-3-3 proteins such as YWHAZ regulates subcellular location (PubMed:10455159). May also interact with FEZ1/LZTS1 and FEZ2 (PubMed:16484223). Interacts with CHD7 and CHD8 (PubMed:33323470). Interacts with DYNLL1/LC8 (PubMed:29955062).</text>
</comment>
<comment type="interaction">
    <interactant intactId="EBI-1047967">
        <id>Q86UE8</id>
    </interactant>
    <interactant intactId="EBI-749553">
        <id>Q9Y294</id>
        <label>ASF1A</label>
    </interactant>
    <organismsDiffer>false</organismsDiffer>
    <experiments>10</experiments>
</comment>
<comment type="interaction">
    <interactant intactId="EBI-1047967">
        <id>Q86UE8</id>
    </interactant>
    <interactant intactId="EBI-739624">
        <id>Q8NHQ1</id>
        <label>CEP70</label>
    </interactant>
    <organismsDiffer>false</organismsDiffer>
    <experiments>3</experiments>
</comment>
<comment type="interaction">
    <interactant intactId="EBI-1047967">
        <id>Q86UE8</id>
    </interactant>
    <interactant intactId="EBI-399105">
        <id>Q9NPF5</id>
        <label>DMAP1</label>
    </interactant>
    <organismsDiffer>false</organismsDiffer>
    <experiments>3</experiments>
</comment>
<comment type="interaction">
    <interactant intactId="EBI-1047967">
        <id>Q86UE8</id>
    </interactant>
    <interactant intactId="EBI-13213391">
        <id>Q96NE9-2</id>
        <label>FRMD6</label>
    </interactant>
    <organismsDiffer>false</organismsDiffer>
    <experiments>3</experiments>
</comment>
<comment type="interaction">
    <interactant intactId="EBI-1047967">
        <id>Q86UE8</id>
    </interactant>
    <interactant intactId="EBI-2548508">
        <id>Q96IK5</id>
        <label>GMCL1</label>
    </interactant>
    <organismsDiffer>false</organismsDiffer>
    <experiments>3</experiments>
</comment>
<comment type="interaction">
    <interactant intactId="EBI-1047967">
        <id>Q86UE8</id>
    </interactant>
    <interactant intactId="EBI-751345">
        <id>Q15306</id>
        <label>IRF4</label>
    </interactant>
    <organismsDiffer>false</organismsDiffer>
    <experiments>2</experiments>
</comment>
<comment type="interaction">
    <interactant intactId="EBI-1047967">
        <id>Q86UE8</id>
    </interactant>
    <interactant intactId="EBI-968267">
        <id>Q92985</id>
        <label>IRF7</label>
    </interactant>
    <organismsDiffer>false</organismsDiffer>
    <experiments>2</experiments>
</comment>
<comment type="interaction">
    <interactant intactId="EBI-1047967">
        <id>Q86UE8</id>
    </interactant>
    <interactant intactId="EBI-296331">
        <id>Q02548</id>
        <label>PAX5</label>
    </interactant>
    <organismsDiffer>false</organismsDiffer>
    <experiments>3</experiments>
</comment>
<comment type="interaction">
    <interactant intactId="EBI-1047967">
        <id>Q86UE8</id>
    </interactant>
    <interactant intactId="EBI-747278">
        <id>P26367</id>
        <label>PAX6</label>
    </interactant>
    <organismsDiffer>false</organismsDiffer>
    <experiments>3</experiments>
</comment>
<comment type="interaction">
    <interactant intactId="EBI-1047967">
        <id>Q86UE8</id>
    </interactant>
    <interactant intactId="EBI-357418">
        <id>Q8TAQ2</id>
        <label>SMARCC2</label>
    </interactant>
    <organismsDiffer>false</organismsDiffer>
    <experiments>3</experiments>
</comment>
<comment type="interaction">
    <interactant intactId="EBI-1047967">
        <id>Q86UE8</id>
    </interactant>
    <interactant intactId="EBI-1047967">
        <id>Q86UE8</id>
        <label>TLK2</label>
    </interactant>
    <organismsDiffer>false</organismsDiffer>
    <experiments>3</experiments>
</comment>
<comment type="interaction">
    <interactant intactId="EBI-1047967">
        <id>Q86UE8</id>
    </interactant>
    <interactant intactId="EBI-10180829">
        <id>Q7KZS0</id>
        <label>UBE2I</label>
    </interactant>
    <organismsDiffer>false</organismsDiffer>
    <experiments>3</experiments>
</comment>
<comment type="subcellular location">
    <subcellularLocation>
        <location evidence="4 16 17 19">Nucleus</location>
    </subcellularLocation>
    <subcellularLocation>
        <location evidence="5 17">Nucleus</location>
        <location evidence="5 17">Nucleoplasm</location>
    </subcellularLocation>
    <subcellularLocation>
        <location evidence="4 17">Cytoplasm</location>
        <location evidence="4 17">Perinuclear region</location>
    </subcellularLocation>
    <subcellularLocation>
        <location evidence="4">Cytoplasm</location>
        <location evidence="4">Cytoskeleton</location>
    </subcellularLocation>
    <text evidence="4">Colocalizes with the cytoplasmic intermediate filament system during the G1 phase of the cell cycle (PubMed:10455159). Present in the perinuclear region at S phase and in the nucleus at late G2 (PubMed:10455159).</text>
</comment>
<comment type="alternative products">
    <event type="alternative splicing"/>
    <isoform>
        <id>Q86UE8-1</id>
        <name evidence="23">1</name>
        <sequence type="displayed"/>
    </isoform>
    <isoform>
        <id>Q86UE8-2</id>
        <name evidence="5">2</name>
        <sequence type="described" ref="VSP_050573"/>
    </isoform>
    <isoform>
        <id>Q86UE8-3</id>
        <name evidence="19">3</name>
        <sequence type="described" ref="VSP_050572 VSP_050573"/>
    </isoform>
</comment>
<comment type="tissue specificity">
    <text evidence="19 20">Detected in placenta, fetal liver, kidney, pancreas, heart and skeletal muscle (PubMed:9427565). Highly expressed in testis (PubMed:9427565, PubMed:9662073). Detected in spleen, thymus, colon, ovary, small intestine, prostate and peripheral blood leukocytes (PubMed:9662073). Almost undetectable in liver and lung (PubMed:9662073).</text>
</comment>
<comment type="PTM">
    <text evidence="8">Phosphorylated at Ser-750, probably by CHEK1.</text>
</comment>
<comment type="PTM">
    <text evidence="16">Autophosphorylated; phosphorylation promotes the assembly of higher order oligomers and enzymatic activity.</text>
</comment>
<comment type="disease" evidence="12 14 15 16 17">
    <disease id="DI-05289">
        <name>Intellectual developmental disorder, autosomal dominant 57</name>
        <acronym>MRD57</acronym>
        <description>A disorder characterized by significantly below average general intellectual functioning associated with impairments in adaptive behavior and manifested during the developmental period. MRD57 is characterized by delayed psychomotor development apparent in infancy or early childhood, and a variety of behavioral abnormalities. Affected individuals may have severe gastro-intestinal problems, and facial dysmorphism.</description>
        <dbReference type="MIM" id="618050"/>
    </disease>
    <text>The disease is caused by variants affecting the gene represented in this entry.</text>
</comment>
<comment type="similarity">
    <text evidence="2">Belongs to the protein kinase superfamily. Ser/Thr protein kinase family.</text>
</comment>
<comment type="sequence caution" evidence="23">
    <conflict type="erroneous initiation">
        <sequence resource="EMBL-CDS" id="AAF03095"/>
    </conflict>
</comment>
<comment type="sequence caution" evidence="23">
    <conflict type="erroneous initiation">
        <sequence resource="EMBL-CDS" id="AAH44925"/>
    </conflict>
</comment>
<comment type="sequence caution" evidence="23">
    <conflict type="erroneous initiation">
        <sequence resource="EMBL-CDS" id="BAA20561"/>
    </conflict>
</comment>